<gene>
    <name type="primary">clcD</name>
</gene>
<evidence type="ECO:0000250" key="1"/>
<evidence type="ECO:0000256" key="2">
    <source>
        <dbReference type="SAM" id="MobiDB-lite"/>
    </source>
</evidence>
<evidence type="ECO:0000305" key="3"/>
<feature type="chain" id="PRO_0000161572" description="Carboxymethylenebutenolidase">
    <location>
        <begin position="1"/>
        <end position="252"/>
    </location>
</feature>
<feature type="region of interest" description="Disordered" evidence="2">
    <location>
        <begin position="1"/>
        <end position="28"/>
    </location>
</feature>
<feature type="active site" evidence="1">
    <location>
        <position position="126"/>
    </location>
</feature>
<feature type="active site" evidence="1">
    <location>
        <position position="183"/>
    </location>
</feature>
<feature type="active site" evidence="1">
    <location>
        <position position="214"/>
    </location>
</feature>
<protein>
    <recommendedName>
        <fullName>Carboxymethylenebutenolidase</fullName>
        <ecNumber>3.1.1.45</ecNumber>
    </recommendedName>
    <alternativeName>
        <fullName>Dienelactone hydrolase</fullName>
        <shortName>DLH</shortName>
    </alternativeName>
</protein>
<sequence length="252" mass="27304">MCHNKSSAPPTPAHISIQQNRTPGTDPVPYLHASSDTGSGDTIVLLTDIFGVTPFYRHLAAMLAEKGHDVVIPDVFHRVGHATDPGRDAALARRRQLDDRLAIEDIERTVAHTVDDQQTFGVLGFCLGGSFALLTAAAHPNQVTATYYAFPKGAPGAKVPVKPPLEAADAIDGPVLCHWGRDDYIDHEEIDQLEQILASAPGPSEIRWYDNAGHSFLAGLTEPNHPSTAAAHDSWQRTVEFFERYLTVGSAN</sequence>
<name>CLCD_RHOOP</name>
<comment type="function">
    <text>Ring cleavage of cyclic ester dienelactone to produce maleylacetate.</text>
</comment>
<comment type="catalytic activity">
    <reaction>
        <text>2-(5-oxo-2,5-dihydrofuran-2-ylidene)acetate + H2O = 4-oxohex-2-enedioate + H(+)</text>
        <dbReference type="Rhea" id="RHEA:12372"/>
        <dbReference type="ChEBI" id="CHEBI:12040"/>
        <dbReference type="ChEBI" id="CHEBI:15377"/>
        <dbReference type="ChEBI" id="CHEBI:15378"/>
        <dbReference type="ChEBI" id="CHEBI:57263"/>
        <dbReference type="EC" id="3.1.1.45"/>
    </reaction>
</comment>
<comment type="pathway">
    <text>Aromatic compound metabolism; 3-chlorocatechol degradation.</text>
</comment>
<comment type="similarity">
    <text evidence="3">Belongs to the dienelactone hydrolase family.</text>
</comment>
<reference key="1">
    <citation type="journal article" date="1998" name="J. Bacteriol.">
        <title>Evolutionary relationship between chlorocatechol catabolic enzymes from Rhodococcus opacus 1CP and their counterparts in proteobacteria: sequence divergence and functional convergence.</title>
        <authorList>
            <person name="Eulberg D."/>
            <person name="Kourbatova E.M."/>
            <person name="Golovleva L.A."/>
            <person name="Schloemann M."/>
        </authorList>
    </citation>
    <scope>NUCLEOTIDE SEQUENCE [GENOMIC DNA]</scope>
    <source>
        <strain>1CP</strain>
    </source>
</reference>
<keyword id="KW-0058">Aromatic hydrocarbons catabolism</keyword>
<keyword id="KW-0378">Hydrolase</keyword>
<keyword id="KW-0719">Serine esterase</keyword>
<organism>
    <name type="scientific">Rhodococcus opacus</name>
    <name type="common">Nocardia opaca</name>
    <dbReference type="NCBI Taxonomy" id="37919"/>
    <lineage>
        <taxon>Bacteria</taxon>
        <taxon>Bacillati</taxon>
        <taxon>Actinomycetota</taxon>
        <taxon>Actinomycetes</taxon>
        <taxon>Mycobacteriales</taxon>
        <taxon>Nocardiaceae</taxon>
        <taxon>Rhodococcus</taxon>
    </lineage>
</organism>
<proteinExistence type="inferred from homology"/>
<dbReference type="EC" id="3.1.1.45"/>
<dbReference type="EMBL" id="AF003948">
    <property type="protein sequence ID" value="AAC38252.1"/>
    <property type="molecule type" value="Genomic_DNA"/>
</dbReference>
<dbReference type="RefSeq" id="WP_065493673.1">
    <property type="nucleotide sequence ID" value="NZ_CP009112.1"/>
</dbReference>
<dbReference type="SMR" id="O67988"/>
<dbReference type="ESTHER" id="rhoop-clcd">
    <property type="family name" value="Dienelactone_hydrolase"/>
</dbReference>
<dbReference type="UniPathway" id="UPA00083"/>
<dbReference type="GO" id="GO:0008806">
    <property type="term" value="F:carboxymethylenebutenolidase activity"/>
    <property type="evidence" value="ECO:0007669"/>
    <property type="project" value="UniProtKB-EC"/>
</dbReference>
<dbReference type="GO" id="GO:0009056">
    <property type="term" value="P:catabolic process"/>
    <property type="evidence" value="ECO:0007669"/>
    <property type="project" value="UniProtKB-KW"/>
</dbReference>
<dbReference type="Gene3D" id="3.40.50.1820">
    <property type="entry name" value="alpha/beta hydrolase"/>
    <property type="match status" value="1"/>
</dbReference>
<dbReference type="InterPro" id="IPR029058">
    <property type="entry name" value="AB_hydrolase_fold"/>
</dbReference>
<dbReference type="InterPro" id="IPR002925">
    <property type="entry name" value="Dienelactn_hydro"/>
</dbReference>
<dbReference type="InterPro" id="IPR051049">
    <property type="entry name" value="Dienelactone_hydrolase-like"/>
</dbReference>
<dbReference type="PANTHER" id="PTHR46623:SF6">
    <property type="entry name" value="ALPHA_BETA-HYDROLASES SUPERFAMILY PROTEIN"/>
    <property type="match status" value="1"/>
</dbReference>
<dbReference type="PANTHER" id="PTHR46623">
    <property type="entry name" value="CARBOXYMETHYLENEBUTENOLIDASE-RELATED"/>
    <property type="match status" value="1"/>
</dbReference>
<dbReference type="Pfam" id="PF01738">
    <property type="entry name" value="DLH"/>
    <property type="match status" value="1"/>
</dbReference>
<dbReference type="SUPFAM" id="SSF53474">
    <property type="entry name" value="alpha/beta-Hydrolases"/>
    <property type="match status" value="1"/>
</dbReference>
<accession>O67988</accession>